<organism>
    <name type="scientific">Naja naja</name>
    <name type="common">Indian cobra</name>
    <dbReference type="NCBI Taxonomy" id="35670"/>
    <lineage>
        <taxon>Eukaryota</taxon>
        <taxon>Metazoa</taxon>
        <taxon>Chordata</taxon>
        <taxon>Craniata</taxon>
        <taxon>Vertebrata</taxon>
        <taxon>Euteleostomi</taxon>
        <taxon>Lepidosauria</taxon>
        <taxon>Squamata</taxon>
        <taxon>Bifurcata</taxon>
        <taxon>Unidentata</taxon>
        <taxon>Episquamata</taxon>
        <taxon>Toxicofera</taxon>
        <taxon>Serpentes</taxon>
        <taxon>Colubroidea</taxon>
        <taxon>Elapidae</taxon>
        <taxon>Elapinae</taxon>
        <taxon>Naja</taxon>
    </lineage>
</organism>
<protein>
    <recommendedName>
        <fullName>Venom nerve growth factor</fullName>
        <shortName>v-NGF</shortName>
        <shortName>vNGF</shortName>
    </recommendedName>
</protein>
<keyword id="KW-0903">Direct protein sequencing</keyword>
<keyword id="KW-1015">Disulfide bond</keyword>
<keyword id="KW-0339">Growth factor</keyword>
<keyword id="KW-0446">Lipid-binding</keyword>
<keyword id="KW-0481">Metalloenzyme inhibitor</keyword>
<keyword id="KW-0483">Metalloprotease inhibitor</keyword>
<keyword id="KW-0646">Protease inhibitor</keyword>
<keyword id="KW-1185">Reference proteome</keyword>
<keyword id="KW-0964">Secreted</keyword>
<keyword id="KW-0800">Toxin</keyword>
<name>NGFV_NAJNA</name>
<accession>P01140</accession>
<evidence type="ECO:0000250" key="1">
    <source>
        <dbReference type="UniProtKB" id="P61898"/>
    </source>
</evidence>
<evidence type="ECO:0000250" key="2">
    <source>
        <dbReference type="UniProtKB" id="P61899"/>
    </source>
</evidence>
<evidence type="ECO:0000269" key="3">
    <source>
    </source>
</evidence>
<evidence type="ECO:0000269" key="4">
    <source>
    </source>
</evidence>
<evidence type="ECO:0000269" key="5">
    <source>
    </source>
</evidence>
<evidence type="ECO:0000305" key="6"/>
<feature type="chain" id="PRO_0000159607" description="Venom nerve growth factor">
    <location>
        <begin position="1"/>
        <end position="116"/>
    </location>
</feature>
<feature type="disulfide bond" evidence="1">
    <location>
        <begin position="14"/>
        <end position="78"/>
    </location>
</feature>
<feature type="disulfide bond" evidence="1">
    <location>
        <begin position="56"/>
        <end position="106"/>
    </location>
</feature>
<feature type="disulfide bond" evidence="1">
    <location>
        <begin position="66"/>
        <end position="108"/>
    </location>
</feature>
<proteinExistence type="evidence at protein level"/>
<dbReference type="PIR" id="S13927">
    <property type="entry name" value="NGNJXI"/>
</dbReference>
<dbReference type="SMR" id="P01140"/>
<dbReference type="Proteomes" id="UP000694559">
    <property type="component" value="Unplaced"/>
</dbReference>
<dbReference type="GO" id="GO:0030424">
    <property type="term" value="C:axon"/>
    <property type="evidence" value="ECO:0007669"/>
    <property type="project" value="TreeGrafter"/>
</dbReference>
<dbReference type="GO" id="GO:0030425">
    <property type="term" value="C:dendrite"/>
    <property type="evidence" value="ECO:0007669"/>
    <property type="project" value="TreeGrafter"/>
</dbReference>
<dbReference type="GO" id="GO:0005615">
    <property type="term" value="C:extracellular space"/>
    <property type="evidence" value="ECO:0007669"/>
    <property type="project" value="TreeGrafter"/>
</dbReference>
<dbReference type="GO" id="GO:0008021">
    <property type="term" value="C:synaptic vesicle"/>
    <property type="evidence" value="ECO:0007669"/>
    <property type="project" value="TreeGrafter"/>
</dbReference>
<dbReference type="GO" id="GO:0008083">
    <property type="term" value="F:growth factor activity"/>
    <property type="evidence" value="ECO:0007669"/>
    <property type="project" value="UniProtKB-KW"/>
</dbReference>
<dbReference type="GO" id="GO:0008289">
    <property type="term" value="F:lipid binding"/>
    <property type="evidence" value="ECO:0007669"/>
    <property type="project" value="UniProtKB-KW"/>
</dbReference>
<dbReference type="GO" id="GO:0008191">
    <property type="term" value="F:metalloendopeptidase inhibitor activity"/>
    <property type="evidence" value="ECO:0000250"/>
    <property type="project" value="UniProtKB"/>
</dbReference>
<dbReference type="GO" id="GO:0005163">
    <property type="term" value="F:nerve growth factor receptor binding"/>
    <property type="evidence" value="ECO:0007669"/>
    <property type="project" value="TreeGrafter"/>
</dbReference>
<dbReference type="GO" id="GO:0090729">
    <property type="term" value="F:toxin activity"/>
    <property type="evidence" value="ECO:0007669"/>
    <property type="project" value="UniProtKB-KW"/>
</dbReference>
<dbReference type="GO" id="GO:0007169">
    <property type="term" value="P:cell surface receptor protein tyrosine kinase signaling pathway"/>
    <property type="evidence" value="ECO:0007669"/>
    <property type="project" value="TreeGrafter"/>
</dbReference>
<dbReference type="GO" id="GO:0050804">
    <property type="term" value="P:modulation of chemical synaptic transmission"/>
    <property type="evidence" value="ECO:0007669"/>
    <property type="project" value="TreeGrafter"/>
</dbReference>
<dbReference type="GO" id="GO:0043524">
    <property type="term" value="P:negative regulation of neuron apoptotic process"/>
    <property type="evidence" value="ECO:0007669"/>
    <property type="project" value="TreeGrafter"/>
</dbReference>
<dbReference type="GO" id="GO:0021675">
    <property type="term" value="P:nerve development"/>
    <property type="evidence" value="ECO:0007669"/>
    <property type="project" value="TreeGrafter"/>
</dbReference>
<dbReference type="GO" id="GO:0038180">
    <property type="term" value="P:nerve growth factor signaling pathway"/>
    <property type="evidence" value="ECO:0007669"/>
    <property type="project" value="TreeGrafter"/>
</dbReference>
<dbReference type="GO" id="GO:0048812">
    <property type="term" value="P:neuron projection morphogenesis"/>
    <property type="evidence" value="ECO:0007669"/>
    <property type="project" value="TreeGrafter"/>
</dbReference>
<dbReference type="FunFam" id="2.10.90.10:FF:000002">
    <property type="entry name" value="Brain-derived neurotrophic factor"/>
    <property type="match status" value="1"/>
</dbReference>
<dbReference type="Gene3D" id="2.10.90.10">
    <property type="entry name" value="Cystine-knot cytokines"/>
    <property type="match status" value="1"/>
</dbReference>
<dbReference type="InterPro" id="IPR029034">
    <property type="entry name" value="Cystine-knot_cytokine"/>
</dbReference>
<dbReference type="InterPro" id="IPR020408">
    <property type="entry name" value="Nerve_growth_factor-like"/>
</dbReference>
<dbReference type="InterPro" id="IPR002072">
    <property type="entry name" value="Nerve_growth_factor-rel"/>
</dbReference>
<dbReference type="InterPro" id="IPR020425">
    <property type="entry name" value="Nerve_growth_factor_bsu"/>
</dbReference>
<dbReference type="InterPro" id="IPR019846">
    <property type="entry name" value="Nerve_growth_factor_CS"/>
</dbReference>
<dbReference type="PANTHER" id="PTHR11589:SF10">
    <property type="entry name" value="BETA-NERVE GROWTH FACTOR"/>
    <property type="match status" value="1"/>
</dbReference>
<dbReference type="PANTHER" id="PTHR11589">
    <property type="entry name" value="NERVE GROWTH FACTOR NGF -RELATED"/>
    <property type="match status" value="1"/>
</dbReference>
<dbReference type="Pfam" id="PF00243">
    <property type="entry name" value="NGF"/>
    <property type="match status" value="1"/>
</dbReference>
<dbReference type="PRINTS" id="PR00268">
    <property type="entry name" value="NGF"/>
</dbReference>
<dbReference type="PRINTS" id="PR01913">
    <property type="entry name" value="NGFBETA"/>
</dbReference>
<dbReference type="SMART" id="SM00140">
    <property type="entry name" value="NGF"/>
    <property type="match status" value="1"/>
</dbReference>
<dbReference type="SUPFAM" id="SSF57501">
    <property type="entry name" value="Cystine-knot cytokines"/>
    <property type="match status" value="1"/>
</dbReference>
<dbReference type="PROSITE" id="PS00248">
    <property type="entry name" value="NGF_1"/>
    <property type="match status" value="1"/>
</dbReference>
<dbReference type="PROSITE" id="PS50270">
    <property type="entry name" value="NGF_2"/>
    <property type="match status" value="1"/>
</dbReference>
<sequence>EDHPVHNLGEHSVCDSVSAWVTKTTATDIKGNTVTVMENVNLDNKVYKEYFFETKCKNPNPEPSGCRGIDSSHWNSYCTETDTFIKALTMEGNQASWRFIRIDTACVCVITKKTGN</sequence>
<comment type="function">
    <text evidence="1 2">Nerve growth factor is important for the development and maintenance of the sympathetic and sensory nervous systems. It stimulates division and differentiation of sympathetic and embryonic sensory neurons as well as basal forebrain cholinergic neurons in the brain. Its relevance in the snake venom is not clear. However, it has been shown to inhibit metalloproteinase-dependent proteolysis of platelet glycoprotein Ib alpha, suggesting a metalloproteinase inhibition to prevent metalloprotease autodigestion and/or protection against prey proteases (By similarity). Binds a lipid between the two protein chains in the homodimer. The lipid-bound form promotes histamine relase from mouse mast cells, contrary to the lipid-free form (By similarity).</text>
</comment>
<comment type="subunit">
    <text evidence="3">Homodimer; non-covalently linked.</text>
</comment>
<comment type="subcellular location">
    <subcellularLocation>
        <location evidence="4">Secreted</location>
    </subcellularLocation>
</comment>
<comment type="tissue specificity">
    <text evidence="4">Expressed by the venom gland.</text>
</comment>
<comment type="PTM">
    <text evidence="5">Not glycosylated.</text>
</comment>
<comment type="similarity">
    <text evidence="6">Belongs to the NGF-beta family.</text>
</comment>
<reference key="1">
    <citation type="journal article" date="1991" name="FEBS Lett.">
        <title>Amino acid sequences of nerve growth factors derived from cobra venoms.</title>
        <authorList>
            <person name="Inoue S."/>
            <person name="Oda T."/>
            <person name="Koyama J."/>
            <person name="Ikeda K."/>
            <person name="Hayashi K."/>
        </authorList>
    </citation>
    <scope>PROTEIN SEQUENCE</scope>
    <source>
        <tissue>Venom</tissue>
    </source>
</reference>
<reference key="2">
    <citation type="journal article" date="2010" name="Biomed. Res.">
        <title>Molecular diversity in venom proteins of the Russell's viper (Daboia russellii russellii) and the Indian cobra (Naja naja) in Sri Lanka.</title>
        <authorList>
            <person name="Suzuki M."/>
            <person name="Itoh T."/>
            <person name="Bandaranayake B.M.A.I.K."/>
            <person name="Ranasinghe J.G."/>
            <person name="Athauda S.B."/>
            <person name="Moriyama A."/>
        </authorList>
    </citation>
    <scope>PROTEIN SEQUENCE OF 1-26</scope>
    <scope>SUBCELLULAR LOCATION</scope>
    <scope>TISSUE SPECIFICITY</scope>
    <source>
        <tissue>Venom</tissue>
    </source>
</reference>
<reference key="3">
    <citation type="journal article" date="1976" name="Biochemistry">
        <title>Purification, characterization, and partial amino acid sequence of nerve growth factor from cobra venom.</title>
        <authorList>
            <person name="Hogue-Angeletti R.A."/>
            <person name="Frazier W.A."/>
            <person name="Jacobs J.W."/>
            <person name="Niall H.D."/>
            <person name="Bradshaw R.A."/>
        </authorList>
    </citation>
    <scope>PRELIMINARY PROTEIN SEQUENCE</scope>
    <scope>SUBUNIT</scope>
    <source>
        <tissue>Venom</tissue>
    </source>
</reference>
<reference key="4">
    <citation type="journal article" date="2011" name="Toxicon">
        <title>Molecular diversity of snake venom nerve growth factors.</title>
        <authorList>
            <person name="Trummal K."/>
            <person name="Tonismagi K."/>
            <person name="Paalme V."/>
            <person name="Jarvekulg L."/>
            <person name="Siigur J."/>
            <person name="Siigur E."/>
        </authorList>
    </citation>
    <scope>CHARACTERIZATION</scope>
    <source>
        <tissue>Venom</tissue>
    </source>
</reference>